<sequence length="389" mass="43496">MQNLTNLSSRTYDQHFPKLSAEQLAENAKKKVIVGMSGGVDSSVSAFILQQQGYQVEGLFMKNWEEDDDTDYCTAAADLADAQAVADKLGMKLHKINFAAEYWDNVFEHFLAEYKAGRTPNPDILCNKEIKFKAFLEYAAEDLGADYIATGHYVRRRGDDENARLLRGLDSNKDQSYFLYTLSHKQVGQSLFPVGDIEKPIVRAIAEDLGLITAKKKDSTGICFIGERKFKDFLARFLPAQPGEIRTVDGKVIGRHDGLMYYTLGQRKGLGIGGIKGMDENPFYVAEKDLVNNVLIVAQGHDNSALLSSGLIARQLHWVDRQPIRENLRCTVKTRYRQTDIPCEIQPIDDETIRVIFDEPQIAVTPGQSAVFYQGEVCLGGGVIETQIK</sequence>
<keyword id="KW-0067">ATP-binding</keyword>
<keyword id="KW-0963">Cytoplasm</keyword>
<keyword id="KW-1015">Disulfide bond</keyword>
<keyword id="KW-0547">Nucleotide-binding</keyword>
<keyword id="KW-0694">RNA-binding</keyword>
<keyword id="KW-0808">Transferase</keyword>
<keyword id="KW-0819">tRNA processing</keyword>
<keyword id="KW-0820">tRNA-binding</keyword>
<dbReference type="EC" id="2.8.1.13" evidence="1"/>
<dbReference type="EMBL" id="AE016827">
    <property type="protein sequence ID" value="AAU36908.1"/>
    <property type="status" value="ALT_INIT"/>
    <property type="molecule type" value="Genomic_DNA"/>
</dbReference>
<dbReference type="RefSeq" id="WP_041639487.1">
    <property type="nucleotide sequence ID" value="NC_006300.1"/>
</dbReference>
<dbReference type="SMR" id="Q65VV2"/>
<dbReference type="STRING" id="221988.MS0301"/>
<dbReference type="KEGG" id="msu:MS0301"/>
<dbReference type="eggNOG" id="COG0482">
    <property type="taxonomic scope" value="Bacteria"/>
</dbReference>
<dbReference type="HOGENOM" id="CLU_035188_1_0_6"/>
<dbReference type="OrthoDB" id="9800696at2"/>
<dbReference type="Proteomes" id="UP000000607">
    <property type="component" value="Chromosome"/>
</dbReference>
<dbReference type="GO" id="GO:0005737">
    <property type="term" value="C:cytoplasm"/>
    <property type="evidence" value="ECO:0007669"/>
    <property type="project" value="UniProtKB-SubCell"/>
</dbReference>
<dbReference type="GO" id="GO:0005524">
    <property type="term" value="F:ATP binding"/>
    <property type="evidence" value="ECO:0007669"/>
    <property type="project" value="UniProtKB-KW"/>
</dbReference>
<dbReference type="GO" id="GO:0000049">
    <property type="term" value="F:tRNA binding"/>
    <property type="evidence" value="ECO:0007669"/>
    <property type="project" value="UniProtKB-KW"/>
</dbReference>
<dbReference type="GO" id="GO:0103016">
    <property type="term" value="F:tRNA-uridine 2-sulfurtransferase activity"/>
    <property type="evidence" value="ECO:0007669"/>
    <property type="project" value="UniProtKB-EC"/>
</dbReference>
<dbReference type="GO" id="GO:0002143">
    <property type="term" value="P:tRNA wobble position uridine thiolation"/>
    <property type="evidence" value="ECO:0007669"/>
    <property type="project" value="TreeGrafter"/>
</dbReference>
<dbReference type="CDD" id="cd01998">
    <property type="entry name" value="MnmA_TRMU-like"/>
    <property type="match status" value="1"/>
</dbReference>
<dbReference type="FunFam" id="2.30.30.280:FF:000001">
    <property type="entry name" value="tRNA-specific 2-thiouridylase MnmA"/>
    <property type="match status" value="1"/>
</dbReference>
<dbReference type="FunFam" id="2.40.30.10:FF:000023">
    <property type="entry name" value="tRNA-specific 2-thiouridylase MnmA"/>
    <property type="match status" value="1"/>
</dbReference>
<dbReference type="FunFam" id="3.40.50.620:FF:000004">
    <property type="entry name" value="tRNA-specific 2-thiouridylase MnmA"/>
    <property type="match status" value="1"/>
</dbReference>
<dbReference type="Gene3D" id="2.30.30.280">
    <property type="entry name" value="Adenine nucleotide alpha hydrolases-like domains"/>
    <property type="match status" value="1"/>
</dbReference>
<dbReference type="Gene3D" id="3.40.50.620">
    <property type="entry name" value="HUPs"/>
    <property type="match status" value="1"/>
</dbReference>
<dbReference type="Gene3D" id="2.40.30.10">
    <property type="entry name" value="Translation factors"/>
    <property type="match status" value="1"/>
</dbReference>
<dbReference type="HAMAP" id="MF_00144">
    <property type="entry name" value="tRNA_thiouridyl_MnmA"/>
    <property type="match status" value="1"/>
</dbReference>
<dbReference type="InterPro" id="IPR004506">
    <property type="entry name" value="MnmA-like"/>
</dbReference>
<dbReference type="InterPro" id="IPR046885">
    <property type="entry name" value="MnmA-like_C"/>
</dbReference>
<dbReference type="InterPro" id="IPR046884">
    <property type="entry name" value="MnmA-like_central"/>
</dbReference>
<dbReference type="InterPro" id="IPR023382">
    <property type="entry name" value="MnmA-like_central_sf"/>
</dbReference>
<dbReference type="InterPro" id="IPR014729">
    <property type="entry name" value="Rossmann-like_a/b/a_fold"/>
</dbReference>
<dbReference type="NCBIfam" id="NF001138">
    <property type="entry name" value="PRK00143.1"/>
    <property type="match status" value="1"/>
</dbReference>
<dbReference type="NCBIfam" id="TIGR00420">
    <property type="entry name" value="trmU"/>
    <property type="match status" value="1"/>
</dbReference>
<dbReference type="PANTHER" id="PTHR11933:SF5">
    <property type="entry name" value="MITOCHONDRIAL TRNA-SPECIFIC 2-THIOURIDYLASE 1"/>
    <property type="match status" value="1"/>
</dbReference>
<dbReference type="PANTHER" id="PTHR11933">
    <property type="entry name" value="TRNA 5-METHYLAMINOMETHYL-2-THIOURIDYLATE -METHYLTRANSFERASE"/>
    <property type="match status" value="1"/>
</dbReference>
<dbReference type="Pfam" id="PF03054">
    <property type="entry name" value="tRNA_Me_trans"/>
    <property type="match status" value="1"/>
</dbReference>
<dbReference type="Pfam" id="PF20258">
    <property type="entry name" value="tRNA_Me_trans_C"/>
    <property type="match status" value="1"/>
</dbReference>
<dbReference type="Pfam" id="PF20259">
    <property type="entry name" value="tRNA_Me_trans_M"/>
    <property type="match status" value="1"/>
</dbReference>
<dbReference type="SUPFAM" id="SSF52402">
    <property type="entry name" value="Adenine nucleotide alpha hydrolases-like"/>
    <property type="match status" value="1"/>
</dbReference>
<comment type="function">
    <text evidence="1">Catalyzes the 2-thiolation of uridine at the wobble position (U34) of tRNA, leading to the formation of s(2)U34.</text>
</comment>
<comment type="catalytic activity">
    <reaction evidence="1">
        <text>S-sulfanyl-L-cysteinyl-[protein] + uridine(34) in tRNA + AH2 + ATP = 2-thiouridine(34) in tRNA + L-cysteinyl-[protein] + A + AMP + diphosphate + H(+)</text>
        <dbReference type="Rhea" id="RHEA:47032"/>
        <dbReference type="Rhea" id="RHEA-COMP:10131"/>
        <dbReference type="Rhea" id="RHEA-COMP:11726"/>
        <dbReference type="Rhea" id="RHEA-COMP:11727"/>
        <dbReference type="Rhea" id="RHEA-COMP:11728"/>
        <dbReference type="ChEBI" id="CHEBI:13193"/>
        <dbReference type="ChEBI" id="CHEBI:15378"/>
        <dbReference type="ChEBI" id="CHEBI:17499"/>
        <dbReference type="ChEBI" id="CHEBI:29950"/>
        <dbReference type="ChEBI" id="CHEBI:30616"/>
        <dbReference type="ChEBI" id="CHEBI:33019"/>
        <dbReference type="ChEBI" id="CHEBI:61963"/>
        <dbReference type="ChEBI" id="CHEBI:65315"/>
        <dbReference type="ChEBI" id="CHEBI:87170"/>
        <dbReference type="ChEBI" id="CHEBI:456215"/>
        <dbReference type="EC" id="2.8.1.13"/>
    </reaction>
</comment>
<comment type="subcellular location">
    <subcellularLocation>
        <location evidence="1">Cytoplasm</location>
    </subcellularLocation>
</comment>
<comment type="similarity">
    <text evidence="1">Belongs to the MnmA/TRMU family.</text>
</comment>
<comment type="sequence caution" evidence="2">
    <conflict type="erroneous initiation">
        <sequence resource="EMBL-CDS" id="AAU36908"/>
    </conflict>
</comment>
<reference key="1">
    <citation type="journal article" date="2004" name="Nat. Biotechnol.">
        <title>The genome sequence of the capnophilic rumen bacterium Mannheimia succiniciproducens.</title>
        <authorList>
            <person name="Hong S.H."/>
            <person name="Kim J.S."/>
            <person name="Lee S.Y."/>
            <person name="In Y.H."/>
            <person name="Choi S.S."/>
            <person name="Rih J.-K."/>
            <person name="Kim C.H."/>
            <person name="Jeong H."/>
            <person name="Hur C.G."/>
            <person name="Kim J.J."/>
        </authorList>
    </citation>
    <scope>NUCLEOTIDE SEQUENCE [LARGE SCALE GENOMIC DNA]</scope>
    <source>
        <strain>KCTC 0769BP / MBEL55E</strain>
    </source>
</reference>
<feature type="chain" id="PRO_0000349690" description="tRNA-specific 2-thiouridylase MnmA">
    <location>
        <begin position="1"/>
        <end position="389"/>
    </location>
</feature>
<feature type="region of interest" description="Interaction with target base in tRNA" evidence="1">
    <location>
        <begin position="121"/>
        <end position="123"/>
    </location>
</feature>
<feature type="region of interest" description="Interaction with tRNA" evidence="1">
    <location>
        <begin position="173"/>
        <end position="175"/>
    </location>
</feature>
<feature type="region of interest" description="Interaction with tRNA" evidence="1">
    <location>
        <begin position="335"/>
        <end position="336"/>
    </location>
</feature>
<feature type="active site" description="Nucleophile" evidence="1">
    <location>
        <position position="126"/>
    </location>
</feature>
<feature type="active site" description="Cysteine persulfide intermediate" evidence="1">
    <location>
        <position position="223"/>
    </location>
</feature>
<feature type="binding site" evidence="1">
    <location>
        <begin position="35"/>
        <end position="42"/>
    </location>
    <ligand>
        <name>ATP</name>
        <dbReference type="ChEBI" id="CHEBI:30616"/>
    </ligand>
</feature>
<feature type="binding site" evidence="1">
    <location>
        <position position="61"/>
    </location>
    <ligand>
        <name>ATP</name>
        <dbReference type="ChEBI" id="CHEBI:30616"/>
    </ligand>
</feature>
<feature type="binding site" evidence="1">
    <location>
        <position position="151"/>
    </location>
    <ligand>
        <name>ATP</name>
        <dbReference type="ChEBI" id="CHEBI:30616"/>
    </ligand>
</feature>
<feature type="site" description="Interaction with tRNA" evidence="1">
    <location>
        <position position="152"/>
    </location>
</feature>
<feature type="site" description="Interaction with tRNA" evidence="1">
    <location>
        <position position="368"/>
    </location>
</feature>
<feature type="disulfide bond" description="Alternate" evidence="1">
    <location>
        <begin position="126"/>
        <end position="223"/>
    </location>
</feature>
<accession>Q65VV2</accession>
<name>MNMA_MANSM</name>
<gene>
    <name evidence="1" type="primary">mnmA</name>
    <name type="ordered locus">MS0301</name>
</gene>
<proteinExistence type="inferred from homology"/>
<evidence type="ECO:0000255" key="1">
    <source>
        <dbReference type="HAMAP-Rule" id="MF_00144"/>
    </source>
</evidence>
<evidence type="ECO:0000305" key="2"/>
<organism>
    <name type="scientific">Mannheimia succiniciproducens (strain KCTC 0769BP / MBEL55E)</name>
    <dbReference type="NCBI Taxonomy" id="221988"/>
    <lineage>
        <taxon>Bacteria</taxon>
        <taxon>Pseudomonadati</taxon>
        <taxon>Pseudomonadota</taxon>
        <taxon>Gammaproteobacteria</taxon>
        <taxon>Pasteurellales</taxon>
        <taxon>Pasteurellaceae</taxon>
        <taxon>Basfia</taxon>
    </lineage>
</organism>
<protein>
    <recommendedName>
        <fullName evidence="1">tRNA-specific 2-thiouridylase MnmA</fullName>
        <ecNumber evidence="1">2.8.1.13</ecNumber>
    </recommendedName>
</protein>